<comment type="cofactor">
    <cofactor evidence="1">
        <name>Ca(2+)</name>
        <dbReference type="ChEBI" id="CHEBI:29108"/>
    </cofactor>
    <text evidence="1">Binds 2 calcium ions per subunit.</text>
</comment>
<comment type="subunit">
    <text>Homopentamer. Pentraxin (or pentaxin) have a discoid arrangement of 5 non-covalently bound subunits.</text>
</comment>
<comment type="subcellular location">
    <subcellularLocation>
        <location>Secreted</location>
    </subcellularLocation>
</comment>
<comment type="disease">
    <text>SAP is a precursor of amyloid component P which is found in basement membrane and associated with amyloid deposits.</text>
</comment>
<comment type="similarity">
    <text evidence="4">Belongs to the pentraxin family.</text>
</comment>
<evidence type="ECO:0000250" key="1"/>
<evidence type="ECO:0000255" key="2">
    <source>
        <dbReference type="PROSITE-ProRule" id="PRU01172"/>
    </source>
</evidence>
<evidence type="ECO:0000269" key="3">
    <source>
    </source>
</evidence>
<evidence type="ECO:0000305" key="4"/>
<name>SAMP_MOUSE</name>
<gene>
    <name type="primary">Apcs</name>
    <name type="synonym">Ptx2</name>
    <name type="synonym">Sap</name>
</gene>
<reference key="1">
    <citation type="journal article" date="1988" name="Biochem. Biophys. Res. Commun.">
        <title>Structure of the mouse serum amyloid P component gene.</title>
        <authorList>
            <person name="Nishiguchi S."/>
            <person name="Maeda S."/>
            <person name="Araki S."/>
            <person name="Shimada K."/>
        </authorList>
    </citation>
    <scope>NUCLEOTIDE SEQUENCE</scope>
</reference>
<reference key="2">
    <citation type="journal article" date="1989" name="Biochem. J.">
        <title>Characterization of the gene encoding mouse serum amyloid P component. Comparison with genes encoding other pentraxins.</title>
        <authorList>
            <person name="Whitehead A.S."/>
            <person name="Rits M."/>
        </authorList>
    </citation>
    <scope>NUCLEOTIDE SEQUENCE</scope>
    <source>
        <strain>CBA/J</strain>
    </source>
</reference>
<reference key="3">
    <citation type="journal article" date="1988" name="J. Immunol.">
        <title>Isolation and analysis of murine serum amyloid P component cDNA clones.</title>
        <authorList>
            <person name="Mole J.E."/>
            <person name="Beaulieu B.L."/>
            <person name="Geheran C.A."/>
            <person name="Carnazza J.A."/>
            <person name="Anderson J.K."/>
        </authorList>
    </citation>
    <scope>NUCLEOTIDE SEQUENCE [MRNA]</scope>
    <source>
        <strain>DBA/2J</strain>
        <tissue>Liver</tissue>
    </source>
</reference>
<reference key="4">
    <citation type="journal article" date="1987" name="Nucleic Acids Res.">
        <title>The complete nucleotide and deduced amino acid sequence of mouse serum amyloid P component.</title>
        <authorList>
            <person name="Ishikawa N."/>
            <person name="Shigemoto K."/>
            <person name="Maruyama N."/>
        </authorList>
    </citation>
    <scope>NUCLEOTIDE SEQUENCE [MRNA]</scope>
    <source>
        <strain>NZB</strain>
        <tissue>Liver</tissue>
    </source>
</reference>
<reference key="5">
    <citation type="journal article" date="2004" name="Genome Res.">
        <title>The status, quality, and expansion of the NIH full-length cDNA project: the Mammalian Gene Collection (MGC).</title>
        <authorList>
            <consortium name="The MGC Project Team"/>
        </authorList>
    </citation>
    <scope>NUCLEOTIDE SEQUENCE [LARGE SCALE MRNA]</scope>
    <source>
        <tissue>Liver</tissue>
    </source>
</reference>
<reference key="6">
    <citation type="journal article" date="1988" name="Immunogenetics">
        <title>Molecular genetics of mouse serum amyloid P component (SAP): cloning and gene mapping.</title>
        <authorList>
            <person name="Whitehead A.S."/>
            <person name="Rits M."/>
            <person name="Michaelson J."/>
        </authorList>
    </citation>
    <scope>NUCLEOTIDE SEQUENCE [MRNA] OF 159-224</scope>
    <source>
        <strain>CBA/J</strain>
        <tissue>Liver</tissue>
    </source>
</reference>
<reference key="7">
    <citation type="journal article" date="2007" name="J. Proteome Res.">
        <title>Enhanced analysis of the mouse plasma proteome using cysteine-containing tryptic glycopeptides.</title>
        <authorList>
            <person name="Bernhard O.K."/>
            <person name="Kapp E.A."/>
            <person name="Simpson R.J."/>
        </authorList>
    </citation>
    <scope>GLYCOSYLATION [LARGE SCALE ANALYSIS] AT ASN-52</scope>
    <source>
        <strain>C57BL/6J</strain>
        <tissue>Plasma</tissue>
    </source>
</reference>
<reference key="8">
    <citation type="journal article" date="2010" name="Cell">
        <title>A tissue-specific atlas of mouse protein phosphorylation and expression.</title>
        <authorList>
            <person name="Huttlin E.L."/>
            <person name="Jedrychowski M.P."/>
            <person name="Elias J.E."/>
            <person name="Goswami T."/>
            <person name="Rad R."/>
            <person name="Beausoleil S.A."/>
            <person name="Villen J."/>
            <person name="Haas W."/>
            <person name="Sowa M.E."/>
            <person name="Gygi S.P."/>
        </authorList>
    </citation>
    <scope>IDENTIFICATION BY MASS SPECTROMETRY [LARGE SCALE ANALYSIS]</scope>
    <source>
        <tissue>Brown adipose tissue</tissue>
        <tissue>Heart</tissue>
        <tissue>Kidney</tissue>
        <tissue>Liver</tissue>
        <tissue>Pancreas</tissue>
        <tissue>Spleen</tissue>
    </source>
</reference>
<organism>
    <name type="scientific">Mus musculus</name>
    <name type="common">Mouse</name>
    <dbReference type="NCBI Taxonomy" id="10090"/>
    <lineage>
        <taxon>Eukaryota</taxon>
        <taxon>Metazoa</taxon>
        <taxon>Chordata</taxon>
        <taxon>Craniata</taxon>
        <taxon>Vertebrata</taxon>
        <taxon>Euteleostomi</taxon>
        <taxon>Mammalia</taxon>
        <taxon>Eutheria</taxon>
        <taxon>Euarchontoglires</taxon>
        <taxon>Glires</taxon>
        <taxon>Rodentia</taxon>
        <taxon>Myomorpha</taxon>
        <taxon>Muroidea</taxon>
        <taxon>Muridae</taxon>
        <taxon>Murinae</taxon>
        <taxon>Mus</taxon>
        <taxon>Mus</taxon>
    </lineage>
</organism>
<dbReference type="EMBL" id="M23552">
    <property type="protein sequence ID" value="AAA40092.1"/>
    <property type="molecule type" value="mRNA"/>
</dbReference>
<dbReference type="EMBL" id="M29535">
    <property type="protein sequence ID" value="AAA40093.1"/>
    <property type="molecule type" value="Genomic_DNA"/>
</dbReference>
<dbReference type="EMBL" id="X16899">
    <property type="protein sequence ID" value="CAA34774.1"/>
    <property type="molecule type" value="Genomic_DNA"/>
</dbReference>
<dbReference type="EMBL" id="X14079">
    <property type="protein sequence ID" value="CAA32243.1"/>
    <property type="molecule type" value="mRNA"/>
</dbReference>
<dbReference type="EMBL" id="Y00426">
    <property type="protein sequence ID" value="CAA68488.1"/>
    <property type="molecule type" value="mRNA"/>
</dbReference>
<dbReference type="EMBL" id="BC061125">
    <property type="protein sequence ID" value="AAH61125.1"/>
    <property type="molecule type" value="mRNA"/>
</dbReference>
<dbReference type="EMBL" id="M23248">
    <property type="protein sequence ID" value="AAA40091.1"/>
    <property type="molecule type" value="mRNA"/>
</dbReference>
<dbReference type="CCDS" id="CCDS15520.1"/>
<dbReference type="PIR" id="A30528">
    <property type="entry name" value="A30528"/>
</dbReference>
<dbReference type="RefSeq" id="NP_035448.2">
    <property type="nucleotide sequence ID" value="NM_011318.3"/>
</dbReference>
<dbReference type="SMR" id="P12246"/>
<dbReference type="BioGRID" id="203069">
    <property type="interactions" value="3"/>
</dbReference>
<dbReference type="FunCoup" id="P12246">
    <property type="interactions" value="89"/>
</dbReference>
<dbReference type="IntAct" id="P12246">
    <property type="interactions" value="1"/>
</dbReference>
<dbReference type="STRING" id="10090.ENSMUSP00000027824"/>
<dbReference type="GlyCosmos" id="P12246">
    <property type="glycosylation" value="1 site, No reported glycans"/>
</dbReference>
<dbReference type="GlyGen" id="P12246">
    <property type="glycosylation" value="1 site, 1 N-linked glycan (1 site)"/>
</dbReference>
<dbReference type="iPTMnet" id="P12246"/>
<dbReference type="PhosphoSitePlus" id="P12246"/>
<dbReference type="CPTAC" id="non-CPTAC-3671"/>
<dbReference type="CPTAC" id="non-CPTAC-5618"/>
<dbReference type="jPOST" id="P12246"/>
<dbReference type="PaxDb" id="10090-ENSMUSP00000027824"/>
<dbReference type="PeptideAtlas" id="P12246"/>
<dbReference type="ProteomicsDB" id="260822"/>
<dbReference type="Antibodypedia" id="3590">
    <property type="antibodies" value="623 antibodies from 39 providers"/>
</dbReference>
<dbReference type="DNASU" id="20219"/>
<dbReference type="Ensembl" id="ENSMUST00000027824.7">
    <property type="protein sequence ID" value="ENSMUSP00000027824.6"/>
    <property type="gene ID" value="ENSMUSG00000026542.7"/>
</dbReference>
<dbReference type="GeneID" id="20219"/>
<dbReference type="KEGG" id="mmu:20219"/>
<dbReference type="UCSC" id="uc007dqy.2">
    <property type="organism name" value="mouse"/>
</dbReference>
<dbReference type="AGR" id="MGI:98229"/>
<dbReference type="CTD" id="325"/>
<dbReference type="MGI" id="MGI:98229">
    <property type="gene designation" value="Apcs"/>
</dbReference>
<dbReference type="VEuPathDB" id="HostDB:ENSMUSG00000026542"/>
<dbReference type="eggNOG" id="ENOG502S201">
    <property type="taxonomic scope" value="Eukaryota"/>
</dbReference>
<dbReference type="GeneTree" id="ENSGT01100000263515"/>
<dbReference type="HOGENOM" id="CLU_032051_2_0_1"/>
<dbReference type="InParanoid" id="P12246"/>
<dbReference type="OMA" id="NPNILDW"/>
<dbReference type="OrthoDB" id="547680at2759"/>
<dbReference type="PhylomeDB" id="P12246"/>
<dbReference type="TreeFam" id="TF330208"/>
<dbReference type="BioGRID-ORCS" id="20219">
    <property type="hits" value="1 hit in 77 CRISPR screens"/>
</dbReference>
<dbReference type="ChiTaRS" id="Pitx2">
    <property type="organism name" value="mouse"/>
</dbReference>
<dbReference type="PRO" id="PR:P12246"/>
<dbReference type="Proteomes" id="UP000000589">
    <property type="component" value="Chromosome 1"/>
</dbReference>
<dbReference type="RNAct" id="P12246">
    <property type="molecule type" value="protein"/>
</dbReference>
<dbReference type="Bgee" id="ENSMUSG00000026542">
    <property type="expression patterns" value="Expressed in left lobe of liver and 35 other cell types or tissues"/>
</dbReference>
<dbReference type="ExpressionAtlas" id="P12246">
    <property type="expression patterns" value="baseline and differential"/>
</dbReference>
<dbReference type="GO" id="GO:0005615">
    <property type="term" value="C:extracellular space"/>
    <property type="evidence" value="ECO:0007669"/>
    <property type="project" value="Ensembl"/>
</dbReference>
<dbReference type="GO" id="GO:0005509">
    <property type="term" value="F:calcium ion binding"/>
    <property type="evidence" value="ECO:0007669"/>
    <property type="project" value="Ensembl"/>
</dbReference>
<dbReference type="GO" id="GO:0030246">
    <property type="term" value="F:carbohydrate binding"/>
    <property type="evidence" value="ECO:0007669"/>
    <property type="project" value="UniProtKB-KW"/>
</dbReference>
<dbReference type="GO" id="GO:0001849">
    <property type="term" value="F:complement component C1q complex binding"/>
    <property type="evidence" value="ECO:0007669"/>
    <property type="project" value="Ensembl"/>
</dbReference>
<dbReference type="GO" id="GO:0042802">
    <property type="term" value="F:identical protein binding"/>
    <property type="evidence" value="ECO:0007669"/>
    <property type="project" value="Ensembl"/>
</dbReference>
<dbReference type="GO" id="GO:0046790">
    <property type="term" value="F:virion binding"/>
    <property type="evidence" value="ECO:0007669"/>
    <property type="project" value="Ensembl"/>
</dbReference>
<dbReference type="GO" id="GO:0046597">
    <property type="term" value="P:host-mediated suppression of symbiont invasion"/>
    <property type="evidence" value="ECO:0007669"/>
    <property type="project" value="Ensembl"/>
</dbReference>
<dbReference type="GO" id="GO:0044871">
    <property type="term" value="P:negative regulation by host of viral glycoprotein metabolic process"/>
    <property type="evidence" value="ECO:0007669"/>
    <property type="project" value="Ensembl"/>
</dbReference>
<dbReference type="GO" id="GO:0045656">
    <property type="term" value="P:negative regulation of monocyte differentiation"/>
    <property type="evidence" value="ECO:0007669"/>
    <property type="project" value="Ensembl"/>
</dbReference>
<dbReference type="CDD" id="cd00152">
    <property type="entry name" value="PTX"/>
    <property type="match status" value="1"/>
</dbReference>
<dbReference type="FunFam" id="2.60.120.200:FF:000070">
    <property type="entry name" value="Serum amyloid P-component"/>
    <property type="match status" value="1"/>
</dbReference>
<dbReference type="Gene3D" id="2.60.120.200">
    <property type="match status" value="1"/>
</dbReference>
<dbReference type="InterPro" id="IPR013320">
    <property type="entry name" value="ConA-like_dom_sf"/>
</dbReference>
<dbReference type="InterPro" id="IPR030476">
    <property type="entry name" value="Pentaxin_CS"/>
</dbReference>
<dbReference type="InterPro" id="IPR001759">
    <property type="entry name" value="Pentraxin-related"/>
</dbReference>
<dbReference type="InterPro" id="IPR051005">
    <property type="entry name" value="Pentraxin_domain"/>
</dbReference>
<dbReference type="PANTHER" id="PTHR45869">
    <property type="entry name" value="C-REACTIVE PROTEIN-RELATED"/>
    <property type="match status" value="1"/>
</dbReference>
<dbReference type="PANTHER" id="PTHR45869:SF5">
    <property type="entry name" value="SERUM AMYLOID P-COMPONENT"/>
    <property type="match status" value="1"/>
</dbReference>
<dbReference type="Pfam" id="PF00354">
    <property type="entry name" value="Pentaxin"/>
    <property type="match status" value="1"/>
</dbReference>
<dbReference type="PRINTS" id="PR00895">
    <property type="entry name" value="PENTAXIN"/>
</dbReference>
<dbReference type="SMART" id="SM00159">
    <property type="entry name" value="PTX"/>
    <property type="match status" value="1"/>
</dbReference>
<dbReference type="SUPFAM" id="SSF49899">
    <property type="entry name" value="Concanavalin A-like lectins/glucanases"/>
    <property type="match status" value="1"/>
</dbReference>
<dbReference type="PROSITE" id="PS00289">
    <property type="entry name" value="PTX_1"/>
    <property type="match status" value="1"/>
</dbReference>
<dbReference type="PROSITE" id="PS51828">
    <property type="entry name" value="PTX_2"/>
    <property type="match status" value="1"/>
</dbReference>
<sequence length="224" mass="26247">MDKLLLWMFVFTSLLSEAFCQTDLKRKVFVFPRESETDHVKLIPHLEKPLQNFTLCFRTYSDLSRSQSLFSYSVKGRDNELLIYKEKVGEYSLYIGQSKVTVRGMEEYLSPVHLCTTWESSSGIVEFWVNGKPWVKKSLQREYTVKAPPSIVLGQEQDNYGGGFQRSQSFVGEFSDLYMWDYVLTPQDILFVYRDSPVNPNILNWQALNYEINGYVVIRPRVWD</sequence>
<keyword id="KW-0034">Amyloid</keyword>
<keyword id="KW-0106">Calcium</keyword>
<keyword id="KW-1015">Disulfide bond</keyword>
<keyword id="KW-0325">Glycoprotein</keyword>
<keyword id="KW-0430">Lectin</keyword>
<keyword id="KW-0479">Metal-binding</keyword>
<keyword id="KW-1185">Reference proteome</keyword>
<keyword id="KW-0964">Secreted</keyword>
<keyword id="KW-0732">Signal</keyword>
<accession>P12246</accession>
<proteinExistence type="evidence at protein level"/>
<protein>
    <recommendedName>
        <fullName>Serum amyloid P-component</fullName>
        <shortName>SAP</shortName>
    </recommendedName>
</protein>
<feature type="signal peptide">
    <location>
        <begin position="1"/>
        <end position="20"/>
    </location>
</feature>
<feature type="chain" id="PRO_0000023542" description="Serum amyloid P-component">
    <location>
        <begin position="21"/>
        <end position="224"/>
    </location>
</feature>
<feature type="domain" description="Pentraxin (PTX)" evidence="2">
    <location>
        <begin position="25"/>
        <end position="224"/>
    </location>
</feature>
<feature type="binding site" evidence="2">
    <location>
        <position position="78"/>
    </location>
    <ligand>
        <name>Ca(2+)</name>
        <dbReference type="ChEBI" id="CHEBI:29108"/>
        <label>1</label>
    </ligand>
</feature>
<feature type="binding site" evidence="2">
    <location>
        <position position="79"/>
    </location>
    <ligand>
        <name>Ca(2+)</name>
        <dbReference type="ChEBI" id="CHEBI:29108"/>
        <label>1</label>
    </ligand>
</feature>
<feature type="binding site" evidence="2">
    <location>
        <position position="156"/>
    </location>
    <ligand>
        <name>Ca(2+)</name>
        <dbReference type="ChEBI" id="CHEBI:29108"/>
        <label>1</label>
    </ligand>
</feature>
<feature type="binding site" evidence="2">
    <location>
        <position position="156"/>
    </location>
    <ligand>
        <name>Ca(2+)</name>
        <dbReference type="ChEBI" id="CHEBI:29108"/>
        <label>2</label>
    </ligand>
</feature>
<feature type="binding site" evidence="2">
    <location>
        <position position="157"/>
    </location>
    <ligand>
        <name>Ca(2+)</name>
        <dbReference type="ChEBI" id="CHEBI:29108"/>
        <label>1</label>
    </ligand>
</feature>
<feature type="binding site" evidence="2">
    <location>
        <position position="158"/>
    </location>
    <ligand>
        <name>Ca(2+)</name>
        <dbReference type="ChEBI" id="CHEBI:29108"/>
        <label>1</label>
    </ligand>
</feature>
<feature type="binding site" evidence="2">
    <location>
        <position position="158"/>
    </location>
    <ligand>
        <name>Ca(2+)</name>
        <dbReference type="ChEBI" id="CHEBI:29108"/>
        <label>2</label>
    </ligand>
</feature>
<feature type="binding site" evidence="2">
    <location>
        <position position="168"/>
    </location>
    <ligand>
        <name>Ca(2+)</name>
        <dbReference type="ChEBI" id="CHEBI:29108"/>
        <label>2</label>
    </ligand>
</feature>
<feature type="glycosylation site" description="N-linked (GlcNAc...) asparagine" evidence="3">
    <location>
        <position position="52"/>
    </location>
</feature>
<feature type="disulfide bond" evidence="2">
    <location>
        <begin position="56"/>
        <end position="115"/>
    </location>
</feature>
<feature type="sequence conflict" description="In Ref. 3; AAA40092/CAA32243." evidence="4" ref="3">
    <original>I</original>
    <variation>V</variation>
    <location>
        <position position="151"/>
    </location>
</feature>
<feature type="sequence conflict" description="In Ref. 4; CAA68488." evidence="4" ref="4">
    <original>G</original>
    <variation>R</variation>
    <location>
        <position position="154"/>
    </location>
</feature>